<keyword id="KW-0963">Cytoplasm</keyword>
<keyword id="KW-0329">Glyoxylate bypass</keyword>
<keyword id="KW-0460">Magnesium</keyword>
<keyword id="KW-0479">Metal-binding</keyword>
<keyword id="KW-0558">Oxidation</keyword>
<keyword id="KW-1185">Reference proteome</keyword>
<keyword id="KW-0808">Transferase</keyword>
<keyword id="KW-0816">Tricarboxylic acid cycle</keyword>
<reference key="1">
    <citation type="submission" date="2007-11" db="EMBL/GenBank/DDBJ databases">
        <title>Complete sequence of Delftia acidovorans DSM 14801 / SPH-1.</title>
        <authorList>
            <person name="Copeland A."/>
            <person name="Lucas S."/>
            <person name="Lapidus A."/>
            <person name="Barry K."/>
            <person name="Glavina del Rio T."/>
            <person name="Dalin E."/>
            <person name="Tice H."/>
            <person name="Pitluck S."/>
            <person name="Lowry S."/>
            <person name="Clum A."/>
            <person name="Schmutz J."/>
            <person name="Larimer F."/>
            <person name="Land M."/>
            <person name="Hauser L."/>
            <person name="Kyrpides N."/>
            <person name="Kim E."/>
            <person name="Schleheck D."/>
            <person name="Richardson P."/>
        </authorList>
    </citation>
    <scope>NUCLEOTIDE SEQUENCE [LARGE SCALE GENOMIC DNA]</scope>
    <source>
        <strain>DSM 14801 / SPH-1</strain>
    </source>
</reference>
<protein>
    <recommendedName>
        <fullName evidence="1">Malate synthase G</fullName>
        <ecNumber evidence="1">2.3.3.9</ecNumber>
    </recommendedName>
</protein>
<name>MASZ_DELAS</name>
<feature type="chain" id="PRO_1000130889" description="Malate synthase G">
    <location>
        <begin position="1"/>
        <end position="730"/>
    </location>
</feature>
<feature type="active site" description="Proton acceptor" evidence="1">
    <location>
        <position position="340"/>
    </location>
</feature>
<feature type="active site" description="Proton donor" evidence="1">
    <location>
        <position position="638"/>
    </location>
</feature>
<feature type="binding site" evidence="1">
    <location>
        <position position="118"/>
    </location>
    <ligand>
        <name>acetyl-CoA</name>
        <dbReference type="ChEBI" id="CHEBI:57288"/>
    </ligand>
</feature>
<feature type="binding site" evidence="1">
    <location>
        <begin position="125"/>
        <end position="126"/>
    </location>
    <ligand>
        <name>acetyl-CoA</name>
        <dbReference type="ChEBI" id="CHEBI:57288"/>
    </ligand>
</feature>
<feature type="binding site" evidence="1">
    <location>
        <position position="276"/>
    </location>
    <ligand>
        <name>acetyl-CoA</name>
        <dbReference type="ChEBI" id="CHEBI:57288"/>
    </ligand>
</feature>
<feature type="binding site" evidence="1">
    <location>
        <position position="313"/>
    </location>
    <ligand>
        <name>acetyl-CoA</name>
        <dbReference type="ChEBI" id="CHEBI:57288"/>
    </ligand>
</feature>
<feature type="binding site" evidence="1">
    <location>
        <position position="340"/>
    </location>
    <ligand>
        <name>glyoxylate</name>
        <dbReference type="ChEBI" id="CHEBI:36655"/>
    </ligand>
</feature>
<feature type="binding site" evidence="1">
    <location>
        <position position="434"/>
    </location>
    <ligand>
        <name>glyoxylate</name>
        <dbReference type="ChEBI" id="CHEBI:36655"/>
    </ligand>
</feature>
<feature type="binding site" evidence="1">
    <location>
        <position position="434"/>
    </location>
    <ligand>
        <name>Mg(2+)</name>
        <dbReference type="ChEBI" id="CHEBI:18420"/>
    </ligand>
</feature>
<feature type="binding site" evidence="1">
    <location>
        <begin position="459"/>
        <end position="462"/>
    </location>
    <ligand>
        <name>glyoxylate</name>
        <dbReference type="ChEBI" id="CHEBI:36655"/>
    </ligand>
</feature>
<feature type="binding site" evidence="1">
    <location>
        <position position="462"/>
    </location>
    <ligand>
        <name>Mg(2+)</name>
        <dbReference type="ChEBI" id="CHEBI:18420"/>
    </ligand>
</feature>
<feature type="binding site" evidence="1">
    <location>
        <position position="543"/>
    </location>
    <ligand>
        <name>acetyl-CoA</name>
        <dbReference type="ChEBI" id="CHEBI:57288"/>
    </ligand>
</feature>
<feature type="modified residue" description="Cysteine sulfenic acid (-SOH)" evidence="1">
    <location>
        <position position="624"/>
    </location>
</feature>
<comment type="function">
    <text evidence="1">Involved in the glycolate utilization. Catalyzes the condensation and subsequent hydrolysis of acetyl-coenzyme A (acetyl-CoA) and glyoxylate to form malate and CoA.</text>
</comment>
<comment type="catalytic activity">
    <reaction evidence="1">
        <text>glyoxylate + acetyl-CoA + H2O = (S)-malate + CoA + H(+)</text>
        <dbReference type="Rhea" id="RHEA:18181"/>
        <dbReference type="ChEBI" id="CHEBI:15377"/>
        <dbReference type="ChEBI" id="CHEBI:15378"/>
        <dbReference type="ChEBI" id="CHEBI:15589"/>
        <dbReference type="ChEBI" id="CHEBI:36655"/>
        <dbReference type="ChEBI" id="CHEBI:57287"/>
        <dbReference type="ChEBI" id="CHEBI:57288"/>
        <dbReference type="EC" id="2.3.3.9"/>
    </reaction>
</comment>
<comment type="cofactor">
    <cofactor evidence="1">
        <name>Mg(2+)</name>
        <dbReference type="ChEBI" id="CHEBI:18420"/>
    </cofactor>
</comment>
<comment type="pathway">
    <text evidence="1">Carbohydrate metabolism; glyoxylate cycle; (S)-malate from isocitrate: step 2/2.</text>
</comment>
<comment type="subunit">
    <text evidence="1">Monomer.</text>
</comment>
<comment type="subcellular location">
    <subcellularLocation>
        <location evidence="1">Cytoplasm</location>
    </subcellularLocation>
</comment>
<comment type="similarity">
    <text evidence="1">Belongs to the malate synthase family. GlcB subfamily.</text>
</comment>
<sequence length="730" mass="78381">MTDRTQAHSLQVATELHRFINEQVLPGTGVAPEAFWKGFDAIVNDLAPRNAALLAERDRLQTELDTWHKAHPGPITDMAGYQQFLTQIGYLVEQPKDAKATTTNVDAELAIQAGPQLVVPILNARYALNAANARWGSLYDALYGTDAIGEDGGAEKGKGYNPVRGAKVIAFARDFLDQAAPLASGSHKDAAGYRVEAGQLVVALKSGGTTGLKNTAQFVGYQGDAAAPSSVLLLNNGLHIDIRIDKTTAIGQTDAAGVADVVVEAALSTILDLEDSVAAVDAEDKVVGYANWLGILKGTLTETFDKGGKSMTRGLNADREYTGADGKPVKLHGRSLMFVRNVGHLMTNPAILWGNGKEIPEGILDAMVTTAIAVHDIKGLGANGIRNSRTGSVYIVKPKMHGPAEAAFASELFGRVEKVLGLPENTVKLGIMDEERRTSVNLKACIAAAASRVAFINTGFLDRTGDEMHTAMYAGPMVRKADMKGSAWLAAYERSNVLVGLGLGLRGKAQIGKGMWAMPDLMKAMLEQKIGHPKAGANTAWVPSPTAATLHALHYHQVNVAEVQKQLEQTNADAERATILADLLQVPVVKEDKWSAAEKQQELDNNVQGILGYVVRWVDQGVGCSKVPDIHNVGLMEDRATLRISSQHIANWLQHGIVTEAQVRETFERMAAVVDQQNAGDALYKPMAGHFDTSMAYQAACDLVFKGKEQPSGYTEPLLHAWRLKVKAAA</sequence>
<evidence type="ECO:0000255" key="1">
    <source>
        <dbReference type="HAMAP-Rule" id="MF_00641"/>
    </source>
</evidence>
<dbReference type="EC" id="2.3.3.9" evidence="1"/>
<dbReference type="EMBL" id="CP000884">
    <property type="protein sequence ID" value="ABX33311.1"/>
    <property type="molecule type" value="Genomic_DNA"/>
</dbReference>
<dbReference type="RefSeq" id="WP_012202597.1">
    <property type="nucleotide sequence ID" value="NC_010002.1"/>
</dbReference>
<dbReference type="SMR" id="A9BRF0"/>
<dbReference type="STRING" id="398578.Daci_0665"/>
<dbReference type="GeneID" id="24118705"/>
<dbReference type="KEGG" id="dac:Daci_0665"/>
<dbReference type="eggNOG" id="COG2225">
    <property type="taxonomic scope" value="Bacteria"/>
</dbReference>
<dbReference type="HOGENOM" id="CLU_028446_1_0_4"/>
<dbReference type="UniPathway" id="UPA00703">
    <property type="reaction ID" value="UER00720"/>
</dbReference>
<dbReference type="Proteomes" id="UP000000784">
    <property type="component" value="Chromosome"/>
</dbReference>
<dbReference type="GO" id="GO:0005829">
    <property type="term" value="C:cytosol"/>
    <property type="evidence" value="ECO:0007669"/>
    <property type="project" value="TreeGrafter"/>
</dbReference>
<dbReference type="GO" id="GO:0000287">
    <property type="term" value="F:magnesium ion binding"/>
    <property type="evidence" value="ECO:0007669"/>
    <property type="project" value="TreeGrafter"/>
</dbReference>
<dbReference type="GO" id="GO:0004474">
    <property type="term" value="F:malate synthase activity"/>
    <property type="evidence" value="ECO:0007669"/>
    <property type="project" value="UniProtKB-UniRule"/>
</dbReference>
<dbReference type="GO" id="GO:0009436">
    <property type="term" value="P:glyoxylate catabolic process"/>
    <property type="evidence" value="ECO:0007669"/>
    <property type="project" value="TreeGrafter"/>
</dbReference>
<dbReference type="GO" id="GO:0006097">
    <property type="term" value="P:glyoxylate cycle"/>
    <property type="evidence" value="ECO:0007669"/>
    <property type="project" value="UniProtKB-UniRule"/>
</dbReference>
<dbReference type="GO" id="GO:0006099">
    <property type="term" value="P:tricarboxylic acid cycle"/>
    <property type="evidence" value="ECO:0007669"/>
    <property type="project" value="UniProtKB-KW"/>
</dbReference>
<dbReference type="FunFam" id="3.20.20.360:FF:000003">
    <property type="entry name" value="Malate synthase G"/>
    <property type="match status" value="1"/>
</dbReference>
<dbReference type="Gene3D" id="3.20.20.360">
    <property type="entry name" value="Malate synthase, domain 3"/>
    <property type="match status" value="2"/>
</dbReference>
<dbReference type="Gene3D" id="1.20.1220.12">
    <property type="entry name" value="Malate synthase, domain III"/>
    <property type="match status" value="1"/>
</dbReference>
<dbReference type="HAMAP" id="MF_00641">
    <property type="entry name" value="Malate_synth_G"/>
    <property type="match status" value="1"/>
</dbReference>
<dbReference type="InterPro" id="IPR044856">
    <property type="entry name" value="Malate_synth_C_sf"/>
</dbReference>
<dbReference type="InterPro" id="IPR011076">
    <property type="entry name" value="Malate_synth_sf"/>
</dbReference>
<dbReference type="InterPro" id="IPR001465">
    <property type="entry name" value="Malate_synthase_TIM"/>
</dbReference>
<dbReference type="InterPro" id="IPR006253">
    <property type="entry name" value="Malate_synthG"/>
</dbReference>
<dbReference type="InterPro" id="IPR048355">
    <property type="entry name" value="MS_C"/>
</dbReference>
<dbReference type="InterPro" id="IPR048356">
    <property type="entry name" value="MS_N"/>
</dbReference>
<dbReference type="InterPro" id="IPR046363">
    <property type="entry name" value="MS_N_TIM-barrel_dom"/>
</dbReference>
<dbReference type="InterPro" id="IPR048357">
    <property type="entry name" value="MSG_insertion"/>
</dbReference>
<dbReference type="NCBIfam" id="TIGR01345">
    <property type="entry name" value="malate_syn_G"/>
    <property type="match status" value="1"/>
</dbReference>
<dbReference type="NCBIfam" id="NF002825">
    <property type="entry name" value="PRK02999.1"/>
    <property type="match status" value="1"/>
</dbReference>
<dbReference type="PANTHER" id="PTHR42739">
    <property type="entry name" value="MALATE SYNTHASE G"/>
    <property type="match status" value="1"/>
</dbReference>
<dbReference type="PANTHER" id="PTHR42739:SF1">
    <property type="entry name" value="MALATE SYNTHASE G"/>
    <property type="match status" value="1"/>
</dbReference>
<dbReference type="Pfam" id="PF20659">
    <property type="entry name" value="MS_C"/>
    <property type="match status" value="1"/>
</dbReference>
<dbReference type="Pfam" id="PF20656">
    <property type="entry name" value="MS_N"/>
    <property type="match status" value="1"/>
</dbReference>
<dbReference type="Pfam" id="PF01274">
    <property type="entry name" value="MS_TIM-barrel"/>
    <property type="match status" value="1"/>
</dbReference>
<dbReference type="Pfam" id="PF20658">
    <property type="entry name" value="MSG_insertion"/>
    <property type="match status" value="1"/>
</dbReference>
<dbReference type="SUPFAM" id="SSF51645">
    <property type="entry name" value="Malate synthase G"/>
    <property type="match status" value="1"/>
</dbReference>
<proteinExistence type="inferred from homology"/>
<organism>
    <name type="scientific">Delftia acidovorans (strain DSM 14801 / SPH-1)</name>
    <dbReference type="NCBI Taxonomy" id="398578"/>
    <lineage>
        <taxon>Bacteria</taxon>
        <taxon>Pseudomonadati</taxon>
        <taxon>Pseudomonadota</taxon>
        <taxon>Betaproteobacteria</taxon>
        <taxon>Burkholderiales</taxon>
        <taxon>Comamonadaceae</taxon>
        <taxon>Delftia</taxon>
    </lineage>
</organism>
<gene>
    <name evidence="1" type="primary">glcB</name>
    <name type="ordered locus">Daci_0665</name>
</gene>
<accession>A9BRF0</accession>